<reference key="1">
    <citation type="submission" date="2008-12" db="EMBL/GenBank/DDBJ databases">
        <title>Complete sequence of chromosome of Methylobacterium chloromethanicum CM4.</title>
        <authorList>
            <consortium name="US DOE Joint Genome Institute"/>
            <person name="Lucas S."/>
            <person name="Copeland A."/>
            <person name="Lapidus A."/>
            <person name="Glavina del Rio T."/>
            <person name="Dalin E."/>
            <person name="Tice H."/>
            <person name="Bruce D."/>
            <person name="Goodwin L."/>
            <person name="Pitluck S."/>
            <person name="Chertkov O."/>
            <person name="Brettin T."/>
            <person name="Detter J.C."/>
            <person name="Han C."/>
            <person name="Larimer F."/>
            <person name="Land M."/>
            <person name="Hauser L."/>
            <person name="Kyrpides N."/>
            <person name="Mikhailova N."/>
            <person name="Marx C."/>
            <person name="Richardson P."/>
        </authorList>
    </citation>
    <scope>NUCLEOTIDE SEQUENCE [LARGE SCALE GENOMIC DNA]</scope>
    <source>
        <strain>CM4 / NCIMB 13688</strain>
    </source>
</reference>
<name>RL16_METC4</name>
<keyword id="KW-0687">Ribonucleoprotein</keyword>
<keyword id="KW-0689">Ribosomal protein</keyword>
<keyword id="KW-0694">RNA-binding</keyword>
<keyword id="KW-0699">rRNA-binding</keyword>
<keyword id="KW-0820">tRNA-binding</keyword>
<feature type="chain" id="PRO_1000166366" description="Large ribosomal subunit protein uL16">
    <location>
        <begin position="1"/>
        <end position="137"/>
    </location>
</feature>
<comment type="function">
    <text evidence="1">Binds 23S rRNA and is also seen to make contacts with the A and possibly P site tRNAs.</text>
</comment>
<comment type="subunit">
    <text evidence="1">Part of the 50S ribosomal subunit.</text>
</comment>
<comment type="similarity">
    <text evidence="1">Belongs to the universal ribosomal protein uL16 family.</text>
</comment>
<proteinExistence type="inferred from homology"/>
<gene>
    <name evidence="1" type="primary">rplP</name>
    <name type="ordered locus">Mchl_2447</name>
</gene>
<dbReference type="EMBL" id="CP001298">
    <property type="protein sequence ID" value="ACK83289.1"/>
    <property type="molecule type" value="Genomic_DNA"/>
</dbReference>
<dbReference type="RefSeq" id="WP_003597105.1">
    <property type="nucleotide sequence ID" value="NC_011757.1"/>
</dbReference>
<dbReference type="SMR" id="B7L0R8"/>
<dbReference type="GeneID" id="72989857"/>
<dbReference type="KEGG" id="mch:Mchl_2447"/>
<dbReference type="HOGENOM" id="CLU_078858_2_1_5"/>
<dbReference type="Proteomes" id="UP000002385">
    <property type="component" value="Chromosome"/>
</dbReference>
<dbReference type="GO" id="GO:0022625">
    <property type="term" value="C:cytosolic large ribosomal subunit"/>
    <property type="evidence" value="ECO:0007669"/>
    <property type="project" value="TreeGrafter"/>
</dbReference>
<dbReference type="GO" id="GO:0019843">
    <property type="term" value="F:rRNA binding"/>
    <property type="evidence" value="ECO:0007669"/>
    <property type="project" value="UniProtKB-UniRule"/>
</dbReference>
<dbReference type="GO" id="GO:0003735">
    <property type="term" value="F:structural constituent of ribosome"/>
    <property type="evidence" value="ECO:0007669"/>
    <property type="project" value="InterPro"/>
</dbReference>
<dbReference type="GO" id="GO:0000049">
    <property type="term" value="F:tRNA binding"/>
    <property type="evidence" value="ECO:0007669"/>
    <property type="project" value="UniProtKB-KW"/>
</dbReference>
<dbReference type="GO" id="GO:0006412">
    <property type="term" value="P:translation"/>
    <property type="evidence" value="ECO:0007669"/>
    <property type="project" value="UniProtKB-UniRule"/>
</dbReference>
<dbReference type="CDD" id="cd01433">
    <property type="entry name" value="Ribosomal_L16_L10e"/>
    <property type="match status" value="1"/>
</dbReference>
<dbReference type="FunFam" id="3.90.1170.10:FF:000001">
    <property type="entry name" value="50S ribosomal protein L16"/>
    <property type="match status" value="1"/>
</dbReference>
<dbReference type="Gene3D" id="3.90.1170.10">
    <property type="entry name" value="Ribosomal protein L10e/L16"/>
    <property type="match status" value="1"/>
</dbReference>
<dbReference type="HAMAP" id="MF_01342">
    <property type="entry name" value="Ribosomal_uL16"/>
    <property type="match status" value="1"/>
</dbReference>
<dbReference type="InterPro" id="IPR047873">
    <property type="entry name" value="Ribosomal_uL16"/>
</dbReference>
<dbReference type="InterPro" id="IPR000114">
    <property type="entry name" value="Ribosomal_uL16_bact-type"/>
</dbReference>
<dbReference type="InterPro" id="IPR020798">
    <property type="entry name" value="Ribosomal_uL16_CS"/>
</dbReference>
<dbReference type="InterPro" id="IPR016180">
    <property type="entry name" value="Ribosomal_uL16_dom"/>
</dbReference>
<dbReference type="InterPro" id="IPR036920">
    <property type="entry name" value="Ribosomal_uL16_sf"/>
</dbReference>
<dbReference type="NCBIfam" id="TIGR01164">
    <property type="entry name" value="rplP_bact"/>
    <property type="match status" value="1"/>
</dbReference>
<dbReference type="PANTHER" id="PTHR12220">
    <property type="entry name" value="50S/60S RIBOSOMAL PROTEIN L16"/>
    <property type="match status" value="1"/>
</dbReference>
<dbReference type="PANTHER" id="PTHR12220:SF13">
    <property type="entry name" value="LARGE RIBOSOMAL SUBUNIT PROTEIN UL16M"/>
    <property type="match status" value="1"/>
</dbReference>
<dbReference type="Pfam" id="PF00252">
    <property type="entry name" value="Ribosomal_L16"/>
    <property type="match status" value="1"/>
</dbReference>
<dbReference type="PRINTS" id="PR00060">
    <property type="entry name" value="RIBOSOMALL16"/>
</dbReference>
<dbReference type="SUPFAM" id="SSF54686">
    <property type="entry name" value="Ribosomal protein L16p/L10e"/>
    <property type="match status" value="1"/>
</dbReference>
<dbReference type="PROSITE" id="PS00586">
    <property type="entry name" value="RIBOSOMAL_L16_1"/>
    <property type="match status" value="1"/>
</dbReference>
<dbReference type="PROSITE" id="PS00701">
    <property type="entry name" value="RIBOSOMAL_L16_2"/>
    <property type="match status" value="1"/>
</dbReference>
<evidence type="ECO:0000255" key="1">
    <source>
        <dbReference type="HAMAP-Rule" id="MF_01342"/>
    </source>
</evidence>
<evidence type="ECO:0000305" key="2"/>
<accession>B7L0R8</accession>
<sequence length="137" mass="15457">MLQPKKTKFRKQFKGRISGAAKGGFELNFGQFGLKCLEPERITARQIEAARRAITREMKRQGRVWIRVFPDLPVTAKPTEVRMGSGKGAPEYWAARVHPGRIMFEVDGVAEDIAREALRLGAAKLPVRTRVIQRIAD</sequence>
<protein>
    <recommendedName>
        <fullName evidence="1">Large ribosomal subunit protein uL16</fullName>
    </recommendedName>
    <alternativeName>
        <fullName evidence="2">50S ribosomal protein L16</fullName>
    </alternativeName>
</protein>
<organism>
    <name type="scientific">Methylorubrum extorquens (strain CM4 / NCIMB 13688)</name>
    <name type="common">Methylobacterium extorquens</name>
    <dbReference type="NCBI Taxonomy" id="440085"/>
    <lineage>
        <taxon>Bacteria</taxon>
        <taxon>Pseudomonadati</taxon>
        <taxon>Pseudomonadota</taxon>
        <taxon>Alphaproteobacteria</taxon>
        <taxon>Hyphomicrobiales</taxon>
        <taxon>Methylobacteriaceae</taxon>
        <taxon>Methylorubrum</taxon>
    </lineage>
</organism>